<gene>
    <name evidence="1" type="primary">smg</name>
    <name type="ordered locus">VV1_1051</name>
</gene>
<proteinExistence type="inferred from homology"/>
<name>SMG_VIBVU</name>
<dbReference type="EMBL" id="AE016795">
    <property type="protein sequence ID" value="AAO09538.1"/>
    <property type="molecule type" value="Genomic_DNA"/>
</dbReference>
<dbReference type="RefSeq" id="WP_011079084.1">
    <property type="nucleotide sequence ID" value="NC_004459.3"/>
</dbReference>
<dbReference type="SMR" id="Q8DDE0"/>
<dbReference type="KEGG" id="vvu:VV1_1051"/>
<dbReference type="HOGENOM" id="CLU_133242_0_0_6"/>
<dbReference type="Proteomes" id="UP000002275">
    <property type="component" value="Chromosome 1"/>
</dbReference>
<dbReference type="HAMAP" id="MF_00598">
    <property type="entry name" value="Smg"/>
    <property type="match status" value="1"/>
</dbReference>
<dbReference type="InterPro" id="IPR007456">
    <property type="entry name" value="Smg"/>
</dbReference>
<dbReference type="NCBIfam" id="NF002897">
    <property type="entry name" value="PRK03430.1"/>
    <property type="match status" value="1"/>
</dbReference>
<dbReference type="PANTHER" id="PTHR38692">
    <property type="entry name" value="PROTEIN SMG"/>
    <property type="match status" value="1"/>
</dbReference>
<dbReference type="PANTHER" id="PTHR38692:SF1">
    <property type="entry name" value="PROTEIN SMG"/>
    <property type="match status" value="1"/>
</dbReference>
<dbReference type="Pfam" id="PF04361">
    <property type="entry name" value="DUF494"/>
    <property type="match status" value="1"/>
</dbReference>
<organism>
    <name type="scientific">Vibrio vulnificus (strain CMCP6)</name>
    <dbReference type="NCBI Taxonomy" id="216895"/>
    <lineage>
        <taxon>Bacteria</taxon>
        <taxon>Pseudomonadati</taxon>
        <taxon>Pseudomonadota</taxon>
        <taxon>Gammaproteobacteria</taxon>
        <taxon>Vibrionales</taxon>
        <taxon>Vibrionaceae</taxon>
        <taxon>Vibrio</taxon>
    </lineage>
</organism>
<sequence length="159" mass="18615">MMMDILMYLFETYIHSDADLQVDQDELEDELLRAGFHQQDIYKALLWLEELAALQQSDAHSAISRCSAVSSTRVYSPKEMQRLDIECRGFLLFLEQINVLTTETREMVIDRVMGLETNEFELEDLKWIILMVLFNVPGNENAYTLMEELLYTKEQGILH</sequence>
<protein>
    <recommendedName>
        <fullName evidence="1">Protein Smg homolog</fullName>
    </recommendedName>
</protein>
<comment type="similarity">
    <text evidence="1">Belongs to the Smg family.</text>
</comment>
<reference key="1">
    <citation type="submission" date="2002-12" db="EMBL/GenBank/DDBJ databases">
        <title>Complete genome sequence of Vibrio vulnificus CMCP6.</title>
        <authorList>
            <person name="Rhee J.H."/>
            <person name="Kim S.Y."/>
            <person name="Chung S.S."/>
            <person name="Kim J.J."/>
            <person name="Moon Y.H."/>
            <person name="Jeong H."/>
            <person name="Choy H.E."/>
        </authorList>
    </citation>
    <scope>NUCLEOTIDE SEQUENCE [LARGE SCALE GENOMIC DNA]</scope>
    <source>
        <strain>CMCP6</strain>
    </source>
</reference>
<evidence type="ECO:0000255" key="1">
    <source>
        <dbReference type="HAMAP-Rule" id="MF_00598"/>
    </source>
</evidence>
<accession>Q8DDE0</accession>
<feature type="chain" id="PRO_0000209186" description="Protein Smg homolog">
    <location>
        <begin position="1"/>
        <end position="159"/>
    </location>
</feature>